<keyword id="KW-0963">Cytoplasm</keyword>
<keyword id="KW-0342">GTP-binding</keyword>
<keyword id="KW-0436">Ligase</keyword>
<keyword id="KW-0460">Magnesium</keyword>
<keyword id="KW-0479">Metal-binding</keyword>
<keyword id="KW-0547">Nucleotide-binding</keyword>
<keyword id="KW-0658">Purine biosynthesis</keyword>
<sequence length="448" mass="48133">MSASAVNVTPGRNVVVVGTQWGDEGKGKIVDWLTDHAQGVVRFQGGHNAGHTLIIGGKKTILRLIPSGIMREGVACYIGNGVVLSPEALFKEIGELEEAGVNVRDRLFISEATTLILPYHIAIDQAREARKGAGKIGTTGRGIGPAYEDKVGRRALRVQDLFDAKTFADRLRENLDFHNFVLTQYLGGAAVDFQATLDTMLGYADRLKPMVADVSRRLYDANNAGQNLLFEGAQGTLLDIDHGTYPFVTSSNCVAGAASAGAGVGPQKLNYILGITKAYCTRVGSGPFPSELYDADNPQRQDQVGVTLANVGKEFGSVTGRPRRTGWLDAAALRRSIQINGVSGLCMTKLDVLDGLDEVKLCVGYKIDGKDADILPRGAADVARCEPVYETFAGWKESTVGIKTWEALPANAQAYLTRVQEVAGVPVDMVSTGPDRDETILLRHPFKV</sequence>
<dbReference type="EC" id="6.3.4.4" evidence="1"/>
<dbReference type="EMBL" id="CP000151">
    <property type="protein sequence ID" value="ABB08696.1"/>
    <property type="molecule type" value="Genomic_DNA"/>
</dbReference>
<dbReference type="RefSeq" id="WP_011352252.1">
    <property type="nucleotide sequence ID" value="NZ_CP024943.1"/>
</dbReference>
<dbReference type="SMR" id="Q39FS0"/>
<dbReference type="KEGG" id="bur:Bcep18194_A5102"/>
<dbReference type="PATRIC" id="fig|482957.22.peg.2039"/>
<dbReference type="HOGENOM" id="CLU_029848_0_0_4"/>
<dbReference type="UniPathway" id="UPA00075">
    <property type="reaction ID" value="UER00335"/>
</dbReference>
<dbReference type="Proteomes" id="UP000002705">
    <property type="component" value="Chromosome 1"/>
</dbReference>
<dbReference type="GO" id="GO:0005737">
    <property type="term" value="C:cytoplasm"/>
    <property type="evidence" value="ECO:0007669"/>
    <property type="project" value="UniProtKB-SubCell"/>
</dbReference>
<dbReference type="GO" id="GO:0004019">
    <property type="term" value="F:adenylosuccinate synthase activity"/>
    <property type="evidence" value="ECO:0007669"/>
    <property type="project" value="UniProtKB-UniRule"/>
</dbReference>
<dbReference type="GO" id="GO:0005525">
    <property type="term" value="F:GTP binding"/>
    <property type="evidence" value="ECO:0007669"/>
    <property type="project" value="UniProtKB-UniRule"/>
</dbReference>
<dbReference type="GO" id="GO:0000287">
    <property type="term" value="F:magnesium ion binding"/>
    <property type="evidence" value="ECO:0007669"/>
    <property type="project" value="UniProtKB-UniRule"/>
</dbReference>
<dbReference type="GO" id="GO:0044208">
    <property type="term" value="P:'de novo' AMP biosynthetic process"/>
    <property type="evidence" value="ECO:0007669"/>
    <property type="project" value="UniProtKB-UniRule"/>
</dbReference>
<dbReference type="GO" id="GO:0046040">
    <property type="term" value="P:IMP metabolic process"/>
    <property type="evidence" value="ECO:0007669"/>
    <property type="project" value="TreeGrafter"/>
</dbReference>
<dbReference type="CDD" id="cd03108">
    <property type="entry name" value="AdSS"/>
    <property type="match status" value="1"/>
</dbReference>
<dbReference type="FunFam" id="1.10.300.10:FF:000001">
    <property type="entry name" value="Adenylosuccinate synthetase"/>
    <property type="match status" value="1"/>
</dbReference>
<dbReference type="FunFam" id="3.90.170.10:FF:000001">
    <property type="entry name" value="Adenylosuccinate synthetase"/>
    <property type="match status" value="1"/>
</dbReference>
<dbReference type="Gene3D" id="3.40.440.10">
    <property type="entry name" value="Adenylosuccinate Synthetase, subunit A, domain 1"/>
    <property type="match status" value="1"/>
</dbReference>
<dbReference type="Gene3D" id="1.10.300.10">
    <property type="entry name" value="Adenylosuccinate Synthetase, subunit A, domain 2"/>
    <property type="match status" value="1"/>
</dbReference>
<dbReference type="Gene3D" id="3.90.170.10">
    <property type="entry name" value="Adenylosuccinate Synthetase, subunit A, domain 3"/>
    <property type="match status" value="1"/>
</dbReference>
<dbReference type="HAMAP" id="MF_00011">
    <property type="entry name" value="Adenylosucc_synth"/>
    <property type="match status" value="1"/>
</dbReference>
<dbReference type="InterPro" id="IPR018220">
    <property type="entry name" value="Adenylosuccin_syn_GTP-bd"/>
</dbReference>
<dbReference type="InterPro" id="IPR033128">
    <property type="entry name" value="Adenylosuccin_syn_Lys_AS"/>
</dbReference>
<dbReference type="InterPro" id="IPR042109">
    <property type="entry name" value="Adenylosuccinate_synth_dom1"/>
</dbReference>
<dbReference type="InterPro" id="IPR042110">
    <property type="entry name" value="Adenylosuccinate_synth_dom2"/>
</dbReference>
<dbReference type="InterPro" id="IPR042111">
    <property type="entry name" value="Adenylosuccinate_synth_dom3"/>
</dbReference>
<dbReference type="InterPro" id="IPR001114">
    <property type="entry name" value="Adenylosuccinate_synthetase"/>
</dbReference>
<dbReference type="InterPro" id="IPR027417">
    <property type="entry name" value="P-loop_NTPase"/>
</dbReference>
<dbReference type="NCBIfam" id="NF002223">
    <property type="entry name" value="PRK01117.1"/>
    <property type="match status" value="1"/>
</dbReference>
<dbReference type="NCBIfam" id="TIGR00184">
    <property type="entry name" value="purA"/>
    <property type="match status" value="1"/>
</dbReference>
<dbReference type="PANTHER" id="PTHR11846">
    <property type="entry name" value="ADENYLOSUCCINATE SYNTHETASE"/>
    <property type="match status" value="1"/>
</dbReference>
<dbReference type="PANTHER" id="PTHR11846:SF0">
    <property type="entry name" value="ADENYLOSUCCINATE SYNTHETASE"/>
    <property type="match status" value="1"/>
</dbReference>
<dbReference type="Pfam" id="PF00709">
    <property type="entry name" value="Adenylsucc_synt"/>
    <property type="match status" value="1"/>
</dbReference>
<dbReference type="SMART" id="SM00788">
    <property type="entry name" value="Adenylsucc_synt"/>
    <property type="match status" value="1"/>
</dbReference>
<dbReference type="SUPFAM" id="SSF52540">
    <property type="entry name" value="P-loop containing nucleoside triphosphate hydrolases"/>
    <property type="match status" value="1"/>
</dbReference>
<dbReference type="PROSITE" id="PS01266">
    <property type="entry name" value="ADENYLOSUCCIN_SYN_1"/>
    <property type="match status" value="1"/>
</dbReference>
<dbReference type="PROSITE" id="PS00513">
    <property type="entry name" value="ADENYLOSUCCIN_SYN_2"/>
    <property type="match status" value="1"/>
</dbReference>
<comment type="function">
    <text evidence="1">Plays an important role in the de novo pathway of purine nucleotide biosynthesis. Catalyzes the first committed step in the biosynthesis of AMP from IMP.</text>
</comment>
<comment type="catalytic activity">
    <reaction evidence="1">
        <text>IMP + L-aspartate + GTP = N(6)-(1,2-dicarboxyethyl)-AMP + GDP + phosphate + 2 H(+)</text>
        <dbReference type="Rhea" id="RHEA:15753"/>
        <dbReference type="ChEBI" id="CHEBI:15378"/>
        <dbReference type="ChEBI" id="CHEBI:29991"/>
        <dbReference type="ChEBI" id="CHEBI:37565"/>
        <dbReference type="ChEBI" id="CHEBI:43474"/>
        <dbReference type="ChEBI" id="CHEBI:57567"/>
        <dbReference type="ChEBI" id="CHEBI:58053"/>
        <dbReference type="ChEBI" id="CHEBI:58189"/>
        <dbReference type="EC" id="6.3.4.4"/>
    </reaction>
</comment>
<comment type="cofactor">
    <cofactor evidence="1">
        <name>Mg(2+)</name>
        <dbReference type="ChEBI" id="CHEBI:18420"/>
    </cofactor>
    <text evidence="1">Binds 1 Mg(2+) ion per subunit.</text>
</comment>
<comment type="pathway">
    <text evidence="1">Purine metabolism; AMP biosynthesis via de novo pathway; AMP from IMP: step 1/2.</text>
</comment>
<comment type="subunit">
    <text evidence="1">Homodimer.</text>
</comment>
<comment type="subcellular location">
    <subcellularLocation>
        <location evidence="1">Cytoplasm</location>
    </subcellularLocation>
</comment>
<comment type="similarity">
    <text evidence="1">Belongs to the adenylosuccinate synthetase family.</text>
</comment>
<evidence type="ECO:0000255" key="1">
    <source>
        <dbReference type="HAMAP-Rule" id="MF_00011"/>
    </source>
</evidence>
<name>PURA1_BURL3</name>
<gene>
    <name evidence="1" type="primary">purA1</name>
    <name type="ordered locus">Bcep18194_A5102</name>
</gene>
<proteinExistence type="inferred from homology"/>
<reference key="1">
    <citation type="submission" date="2005-10" db="EMBL/GenBank/DDBJ databases">
        <title>Complete sequence of chromosome 1 of Burkholderia sp. 383.</title>
        <authorList>
            <consortium name="US DOE Joint Genome Institute"/>
            <person name="Copeland A."/>
            <person name="Lucas S."/>
            <person name="Lapidus A."/>
            <person name="Barry K."/>
            <person name="Detter J.C."/>
            <person name="Glavina T."/>
            <person name="Hammon N."/>
            <person name="Israni S."/>
            <person name="Pitluck S."/>
            <person name="Chain P."/>
            <person name="Malfatti S."/>
            <person name="Shin M."/>
            <person name="Vergez L."/>
            <person name="Schmutz J."/>
            <person name="Larimer F."/>
            <person name="Land M."/>
            <person name="Kyrpides N."/>
            <person name="Lykidis A."/>
            <person name="Richardson P."/>
        </authorList>
    </citation>
    <scope>NUCLEOTIDE SEQUENCE [LARGE SCALE GENOMIC DNA]</scope>
    <source>
        <strain>ATCC 17760 / DSM 23089 / LMG 22485 / NCIMB 9086 / R18194 / 383</strain>
    </source>
</reference>
<feature type="chain" id="PRO_0000224264" description="Adenylosuccinate synthetase 1">
    <location>
        <begin position="1"/>
        <end position="448"/>
    </location>
</feature>
<feature type="active site" description="Proton acceptor" evidence="1">
    <location>
        <position position="23"/>
    </location>
</feature>
<feature type="active site" description="Proton donor" evidence="1">
    <location>
        <position position="51"/>
    </location>
</feature>
<feature type="binding site" evidence="1">
    <location>
        <begin position="22"/>
        <end position="28"/>
    </location>
    <ligand>
        <name>GTP</name>
        <dbReference type="ChEBI" id="CHEBI:37565"/>
    </ligand>
</feature>
<feature type="binding site" description="in other chain" evidence="1">
    <location>
        <begin position="23"/>
        <end position="26"/>
    </location>
    <ligand>
        <name>IMP</name>
        <dbReference type="ChEBI" id="CHEBI:58053"/>
        <note>ligand shared between dimeric partners</note>
    </ligand>
</feature>
<feature type="binding site" evidence="1">
    <location>
        <position position="23"/>
    </location>
    <ligand>
        <name>Mg(2+)</name>
        <dbReference type="ChEBI" id="CHEBI:18420"/>
    </ligand>
</feature>
<feature type="binding site" description="in other chain" evidence="1">
    <location>
        <begin position="48"/>
        <end position="51"/>
    </location>
    <ligand>
        <name>IMP</name>
        <dbReference type="ChEBI" id="CHEBI:58053"/>
        <note>ligand shared between dimeric partners</note>
    </ligand>
</feature>
<feature type="binding site" evidence="1">
    <location>
        <begin position="50"/>
        <end position="52"/>
    </location>
    <ligand>
        <name>GTP</name>
        <dbReference type="ChEBI" id="CHEBI:37565"/>
    </ligand>
</feature>
<feature type="binding site" evidence="1">
    <location>
        <position position="50"/>
    </location>
    <ligand>
        <name>Mg(2+)</name>
        <dbReference type="ChEBI" id="CHEBI:18420"/>
    </ligand>
</feature>
<feature type="binding site" description="in other chain" evidence="1">
    <location>
        <position position="139"/>
    </location>
    <ligand>
        <name>IMP</name>
        <dbReference type="ChEBI" id="CHEBI:58053"/>
        <note>ligand shared between dimeric partners</note>
    </ligand>
</feature>
<feature type="binding site" evidence="1">
    <location>
        <position position="153"/>
    </location>
    <ligand>
        <name>IMP</name>
        <dbReference type="ChEBI" id="CHEBI:58053"/>
        <note>ligand shared between dimeric partners</note>
    </ligand>
</feature>
<feature type="binding site" description="in other chain" evidence="1">
    <location>
        <position position="234"/>
    </location>
    <ligand>
        <name>IMP</name>
        <dbReference type="ChEBI" id="CHEBI:58053"/>
        <note>ligand shared between dimeric partners</note>
    </ligand>
</feature>
<feature type="binding site" description="in other chain" evidence="1">
    <location>
        <position position="249"/>
    </location>
    <ligand>
        <name>IMP</name>
        <dbReference type="ChEBI" id="CHEBI:58053"/>
        <note>ligand shared between dimeric partners</note>
    </ligand>
</feature>
<feature type="binding site" evidence="1">
    <location>
        <begin position="317"/>
        <end position="323"/>
    </location>
    <ligand>
        <name>substrate</name>
    </ligand>
</feature>
<feature type="binding site" description="in other chain" evidence="1">
    <location>
        <position position="321"/>
    </location>
    <ligand>
        <name>IMP</name>
        <dbReference type="ChEBI" id="CHEBI:58053"/>
        <note>ligand shared between dimeric partners</note>
    </ligand>
</feature>
<feature type="binding site" evidence="1">
    <location>
        <position position="323"/>
    </location>
    <ligand>
        <name>GTP</name>
        <dbReference type="ChEBI" id="CHEBI:37565"/>
    </ligand>
</feature>
<feature type="binding site" evidence="1">
    <location>
        <begin position="349"/>
        <end position="351"/>
    </location>
    <ligand>
        <name>GTP</name>
        <dbReference type="ChEBI" id="CHEBI:37565"/>
    </ligand>
</feature>
<feature type="binding site" evidence="1">
    <location>
        <begin position="431"/>
        <end position="433"/>
    </location>
    <ligand>
        <name>GTP</name>
        <dbReference type="ChEBI" id="CHEBI:37565"/>
    </ligand>
</feature>
<organism>
    <name type="scientific">Burkholderia lata (strain ATCC 17760 / DSM 23089 / LMG 22485 / NCIMB 9086 / R18194 / 383)</name>
    <dbReference type="NCBI Taxonomy" id="482957"/>
    <lineage>
        <taxon>Bacteria</taxon>
        <taxon>Pseudomonadati</taxon>
        <taxon>Pseudomonadota</taxon>
        <taxon>Betaproteobacteria</taxon>
        <taxon>Burkholderiales</taxon>
        <taxon>Burkholderiaceae</taxon>
        <taxon>Burkholderia</taxon>
        <taxon>Burkholderia cepacia complex</taxon>
    </lineage>
</organism>
<protein>
    <recommendedName>
        <fullName evidence="1">Adenylosuccinate synthetase 1</fullName>
        <shortName evidence="1">AMPSase 1</shortName>
        <shortName evidence="1">AdSS 1</shortName>
        <ecNumber evidence="1">6.3.4.4</ecNumber>
    </recommendedName>
    <alternativeName>
        <fullName evidence="1">IMP--aspartate ligase 1</fullName>
    </alternativeName>
</protein>
<accession>Q39FS0</accession>